<organism>
    <name type="scientific">Leuconostoc mesenteroides subsp. mesenteroides (strain ATCC 8293 / DSM 20343 / BCRC 11652 / CCM 1803 / JCM 6124 / NCDO 523 / NBRC 100496 / NCIMB 8023 / NCTC 12954 / NRRL B-1118 / 37Y)</name>
    <dbReference type="NCBI Taxonomy" id="203120"/>
    <lineage>
        <taxon>Bacteria</taxon>
        <taxon>Bacillati</taxon>
        <taxon>Bacillota</taxon>
        <taxon>Bacilli</taxon>
        <taxon>Lactobacillales</taxon>
        <taxon>Lactobacillaceae</taxon>
        <taxon>Leuconostoc</taxon>
    </lineage>
</organism>
<feature type="chain" id="PRO_0000304845" description="UPF0473 protein LEUM_0559">
    <location>
        <begin position="1"/>
        <end position="99"/>
    </location>
</feature>
<evidence type="ECO:0000255" key="1">
    <source>
        <dbReference type="HAMAP-Rule" id="MF_01448"/>
    </source>
</evidence>
<reference key="1">
    <citation type="journal article" date="2006" name="Proc. Natl. Acad. Sci. U.S.A.">
        <title>Comparative genomics of the lactic acid bacteria.</title>
        <authorList>
            <person name="Makarova K.S."/>
            <person name="Slesarev A."/>
            <person name="Wolf Y.I."/>
            <person name="Sorokin A."/>
            <person name="Mirkin B."/>
            <person name="Koonin E.V."/>
            <person name="Pavlov A."/>
            <person name="Pavlova N."/>
            <person name="Karamychev V."/>
            <person name="Polouchine N."/>
            <person name="Shakhova V."/>
            <person name="Grigoriev I."/>
            <person name="Lou Y."/>
            <person name="Rohksar D."/>
            <person name="Lucas S."/>
            <person name="Huang K."/>
            <person name="Goodstein D.M."/>
            <person name="Hawkins T."/>
            <person name="Plengvidhya V."/>
            <person name="Welker D."/>
            <person name="Hughes J."/>
            <person name="Goh Y."/>
            <person name="Benson A."/>
            <person name="Baldwin K."/>
            <person name="Lee J.-H."/>
            <person name="Diaz-Muniz I."/>
            <person name="Dosti B."/>
            <person name="Smeianov V."/>
            <person name="Wechter W."/>
            <person name="Barabote R."/>
            <person name="Lorca G."/>
            <person name="Altermann E."/>
            <person name="Barrangou R."/>
            <person name="Ganesan B."/>
            <person name="Xie Y."/>
            <person name="Rawsthorne H."/>
            <person name="Tamir D."/>
            <person name="Parker C."/>
            <person name="Breidt F."/>
            <person name="Broadbent J.R."/>
            <person name="Hutkins R."/>
            <person name="O'Sullivan D."/>
            <person name="Steele J."/>
            <person name="Unlu G."/>
            <person name="Saier M.H. Jr."/>
            <person name="Klaenhammer T."/>
            <person name="Richardson P."/>
            <person name="Kozyavkin S."/>
            <person name="Weimer B.C."/>
            <person name="Mills D.A."/>
        </authorList>
    </citation>
    <scope>NUCLEOTIDE SEQUENCE [LARGE SCALE GENOMIC DNA]</scope>
    <source>
        <strain>ATCC 8293 / DSM 20343 / BCRC 11652 / CCM 1803 / JCM 6124 / NCDO 523 / NBRC 100496 / NCIMB 8023 / NCTC 12954 / NRRL B-1118 / 37Y</strain>
    </source>
</reference>
<dbReference type="EMBL" id="CP000414">
    <property type="protein sequence ID" value="ABJ61673.1"/>
    <property type="molecule type" value="Genomic_DNA"/>
</dbReference>
<dbReference type="RefSeq" id="WP_011679384.1">
    <property type="nucleotide sequence ID" value="NC_008531.1"/>
</dbReference>
<dbReference type="EnsemblBacteria" id="ABJ61673">
    <property type="protein sequence ID" value="ABJ61673"/>
    <property type="gene ID" value="LEUM_0559"/>
</dbReference>
<dbReference type="GeneID" id="29576091"/>
<dbReference type="KEGG" id="lme:LEUM_0559"/>
<dbReference type="eggNOG" id="COG3906">
    <property type="taxonomic scope" value="Bacteria"/>
</dbReference>
<dbReference type="HOGENOM" id="CLU_146610_2_1_9"/>
<dbReference type="Proteomes" id="UP000000362">
    <property type="component" value="Chromosome"/>
</dbReference>
<dbReference type="HAMAP" id="MF_01448">
    <property type="entry name" value="UPF0473"/>
    <property type="match status" value="1"/>
</dbReference>
<dbReference type="InterPro" id="IPR009711">
    <property type="entry name" value="UPF0473"/>
</dbReference>
<dbReference type="NCBIfam" id="NF010217">
    <property type="entry name" value="PRK13678.1-4"/>
    <property type="match status" value="1"/>
</dbReference>
<dbReference type="PANTHER" id="PTHR40066">
    <property type="entry name" value="UPF0473 PROTEIN CBO2561/CLC_2432"/>
    <property type="match status" value="1"/>
</dbReference>
<dbReference type="PANTHER" id="PTHR40066:SF1">
    <property type="entry name" value="UPF0473 PROTEIN CBO2561_CLC_2432"/>
    <property type="match status" value="1"/>
</dbReference>
<dbReference type="Pfam" id="PF06949">
    <property type="entry name" value="DUF1292"/>
    <property type="match status" value="1"/>
</dbReference>
<gene>
    <name type="ordered locus">LEUM_0559</name>
</gene>
<proteinExistence type="inferred from homology"/>
<comment type="similarity">
    <text evidence="1">Belongs to the UPF0473 family.</text>
</comment>
<name>Y559_LEUMM</name>
<protein>
    <recommendedName>
        <fullName evidence="1">UPF0473 protein LEUM_0559</fullName>
    </recommendedName>
</protein>
<keyword id="KW-1185">Reference proteome</keyword>
<sequence>MSENNAEVQKITLIDESGDEALYEVLFTFHSDEYNKDYILLVPEGIEDDEEVDIQAYIFNPDENGDATEEELIQIEDDKEWDMVEEVLNTFLEDDSNFN</sequence>
<accession>Q03YP9</accession>